<gene>
    <name type="primary">SGMS2</name>
    <name type="ORF">QtsA-16184</name>
</gene>
<proteinExistence type="evidence at transcript level"/>
<sequence>MDIIETAKLEEHLENQPSDPTNTYTRPTEPVEEENKNGNGKPKSLSSGLRKGTKKYPDYIQIAMPTESRNKFPLEWWKTGIAFIYAVFNLVLTTVMITVVHERVPPKELSPPLPDKFFDYIDRVKWAFSVSEINGIILVGLWITQWLFLRYKSIVGRRFCFIIGTLYLYRCITMYVTTLPVPGMHFQCAPKLNGDSQAKVQRILRLISGGGLSITGSHILCGDFLFSGHTVTLTLTYLFIKEYSPRHFWWYHLICWLLSAAGIICILVAHEHYTVDVIIAYYITTRLFWWYHSMANEKNLKVSLQTNFLSRAWWFPIFYFFEKNVQGSIPCCFSWPLSWPPGCFKSSCKKYSRVQKIGEDNEKST</sequence>
<dbReference type="EC" id="2.7.8.27" evidence="2"/>
<dbReference type="EMBL" id="AB168962">
    <property type="protein sequence ID" value="BAE01060.1"/>
    <property type="molecule type" value="mRNA"/>
</dbReference>
<dbReference type="RefSeq" id="NP_001270184.1">
    <property type="nucleotide sequence ID" value="NM_001283255.1"/>
</dbReference>
<dbReference type="SMR" id="Q4R763"/>
<dbReference type="STRING" id="9541.ENSMFAP00000041700"/>
<dbReference type="eggNOG" id="KOG3058">
    <property type="taxonomic scope" value="Eukaryota"/>
</dbReference>
<dbReference type="Proteomes" id="UP000233100">
    <property type="component" value="Unplaced"/>
</dbReference>
<dbReference type="GO" id="GO:0005789">
    <property type="term" value="C:endoplasmic reticulum membrane"/>
    <property type="evidence" value="ECO:0007669"/>
    <property type="project" value="TreeGrafter"/>
</dbReference>
<dbReference type="GO" id="GO:0000139">
    <property type="term" value="C:Golgi membrane"/>
    <property type="evidence" value="ECO:0007669"/>
    <property type="project" value="UniProtKB-SubCell"/>
</dbReference>
<dbReference type="GO" id="GO:0005886">
    <property type="term" value="C:plasma membrane"/>
    <property type="evidence" value="ECO:0007669"/>
    <property type="project" value="UniProtKB-SubCell"/>
</dbReference>
<dbReference type="GO" id="GO:0047493">
    <property type="term" value="F:ceramide cholinephosphotransferase activity"/>
    <property type="evidence" value="ECO:0007669"/>
    <property type="project" value="TreeGrafter"/>
</dbReference>
<dbReference type="GO" id="GO:0016301">
    <property type="term" value="F:kinase activity"/>
    <property type="evidence" value="ECO:0007669"/>
    <property type="project" value="UniProtKB-KW"/>
</dbReference>
<dbReference type="GO" id="GO:0033188">
    <property type="term" value="F:sphingomyelin synthase activity"/>
    <property type="evidence" value="ECO:0007669"/>
    <property type="project" value="UniProtKB-EC"/>
</dbReference>
<dbReference type="GO" id="GO:0046513">
    <property type="term" value="P:ceramide biosynthetic process"/>
    <property type="evidence" value="ECO:0007669"/>
    <property type="project" value="TreeGrafter"/>
</dbReference>
<dbReference type="GO" id="GO:0030500">
    <property type="term" value="P:regulation of bone mineralization"/>
    <property type="evidence" value="ECO:0000250"/>
    <property type="project" value="UniProtKB"/>
</dbReference>
<dbReference type="GO" id="GO:0006686">
    <property type="term" value="P:sphingomyelin biosynthetic process"/>
    <property type="evidence" value="ECO:0007669"/>
    <property type="project" value="TreeGrafter"/>
</dbReference>
<dbReference type="CDD" id="cd01610">
    <property type="entry name" value="PAP2_like"/>
    <property type="match status" value="1"/>
</dbReference>
<dbReference type="InterPro" id="IPR045221">
    <property type="entry name" value="Sphingomyelin_synth-like"/>
</dbReference>
<dbReference type="InterPro" id="IPR025749">
    <property type="entry name" value="Sphingomyelin_synth-like_dom"/>
</dbReference>
<dbReference type="PANTHER" id="PTHR21290:SF24">
    <property type="entry name" value="PHOSPHATIDYLCHOLINE:CERAMIDE CHOLINEPHOSPHOTRANSFERASE 2"/>
    <property type="match status" value="1"/>
</dbReference>
<dbReference type="PANTHER" id="PTHR21290">
    <property type="entry name" value="SPHINGOMYELIN SYNTHETASE"/>
    <property type="match status" value="1"/>
</dbReference>
<dbReference type="Pfam" id="PF14360">
    <property type="entry name" value="PAP2_C"/>
    <property type="match status" value="1"/>
</dbReference>
<reference key="1">
    <citation type="submission" date="2005-06" db="EMBL/GenBank/DDBJ databases">
        <title>DNA sequences of macaque genes expressed in brain or testis and its evolutionary implications.</title>
        <authorList>
            <consortium name="International consortium for macaque cDNA sequencing and analysis"/>
        </authorList>
    </citation>
    <scope>NUCLEOTIDE SEQUENCE [LARGE SCALE MRNA]</scope>
    <source>
        <tissue>Testis</tissue>
    </source>
</reference>
<evidence type="ECO:0000250" key="1"/>
<evidence type="ECO:0000250" key="2">
    <source>
        <dbReference type="UniProtKB" id="Q8NHU3"/>
    </source>
</evidence>
<evidence type="ECO:0000250" key="3">
    <source>
        <dbReference type="UniProtKB" id="Q9D4B1"/>
    </source>
</evidence>
<evidence type="ECO:0000255" key="4"/>
<evidence type="ECO:0000256" key="5">
    <source>
        <dbReference type="SAM" id="MobiDB-lite"/>
    </source>
</evidence>
<evidence type="ECO:0000305" key="6"/>
<organism>
    <name type="scientific">Macaca fascicularis</name>
    <name type="common">Crab-eating macaque</name>
    <name type="synonym">Cynomolgus monkey</name>
    <dbReference type="NCBI Taxonomy" id="9541"/>
    <lineage>
        <taxon>Eukaryota</taxon>
        <taxon>Metazoa</taxon>
        <taxon>Chordata</taxon>
        <taxon>Craniata</taxon>
        <taxon>Vertebrata</taxon>
        <taxon>Euteleostomi</taxon>
        <taxon>Mammalia</taxon>
        <taxon>Eutheria</taxon>
        <taxon>Euarchontoglires</taxon>
        <taxon>Primates</taxon>
        <taxon>Haplorrhini</taxon>
        <taxon>Catarrhini</taxon>
        <taxon>Cercopithecidae</taxon>
        <taxon>Cercopithecinae</taxon>
        <taxon>Macaca</taxon>
    </lineage>
</organism>
<feature type="chain" id="PRO_0000290122" description="Phosphatidylcholine:ceramide cholinephosphotransferase 2">
    <location>
        <begin position="1"/>
        <end position="365"/>
    </location>
</feature>
<feature type="transmembrane region" description="Helical" evidence="4">
    <location>
        <begin position="80"/>
        <end position="100"/>
    </location>
</feature>
<feature type="transmembrane region" description="Helical" evidence="4">
    <location>
        <begin position="128"/>
        <end position="148"/>
    </location>
</feature>
<feature type="transmembrane region" description="Helical" evidence="4">
    <location>
        <begin position="159"/>
        <end position="179"/>
    </location>
</feature>
<feature type="transmembrane region" description="Helical" evidence="4">
    <location>
        <begin position="218"/>
        <end position="240"/>
    </location>
</feature>
<feature type="transmembrane region" description="Helical" evidence="4">
    <location>
        <begin position="248"/>
        <end position="268"/>
    </location>
</feature>
<feature type="transmembrane region" description="Helical" evidence="4">
    <location>
        <begin position="273"/>
        <end position="290"/>
    </location>
</feature>
<feature type="topological domain" description="Cytoplasmic" evidence="4">
    <location>
        <begin position="291"/>
        <end position="365"/>
    </location>
</feature>
<feature type="region of interest" description="Disordered" evidence="5">
    <location>
        <begin position="1"/>
        <end position="52"/>
    </location>
</feature>
<feature type="compositionally biased region" description="Basic and acidic residues" evidence="5">
    <location>
        <begin position="1"/>
        <end position="14"/>
    </location>
</feature>
<feature type="compositionally biased region" description="Polar residues" evidence="5">
    <location>
        <begin position="15"/>
        <end position="26"/>
    </location>
</feature>
<feature type="active site" evidence="1">
    <location>
        <position position="229"/>
    </location>
</feature>
<feature type="active site" evidence="1">
    <location>
        <position position="272"/>
    </location>
</feature>
<feature type="active site" evidence="1">
    <location>
        <position position="276"/>
    </location>
</feature>
<feature type="lipid moiety-binding region" description="S-palmitoyl cysteine" evidence="1">
    <location>
        <position position="331"/>
    </location>
</feature>
<feature type="lipid moiety-binding region" description="S-palmitoyl cysteine" evidence="1">
    <location>
        <position position="332"/>
    </location>
</feature>
<feature type="lipid moiety-binding region" description="S-palmitoyl cysteine" evidence="1">
    <location>
        <position position="343"/>
    </location>
</feature>
<feature type="lipid moiety-binding region" description="S-palmitoyl cysteine" evidence="1">
    <location>
        <position position="348"/>
    </location>
</feature>
<accession>Q4R763</accession>
<comment type="function">
    <text evidence="2">Sphingomyelin synthase that primarily contributes to sphingomyelin synthesis and homeostasis at the plasma membrane. Catalyzes the reversible transfer of phosphocholine moiety in sphingomyelin biosynthesis: in the forward reaction transfers phosphocholine head group of phosphatidylcholine (PC) on to ceramide (CER) to form ceramide phosphocholine (sphingomyelin, SM) and diacylglycerol (DAG) as by-product, and in the reverse reaction transfers phosphocholine from SM to DAG to form PC and CER. The direction of the reaction appears to depend on the levels of CER and DAG in the plasma membrane. Does not use free phosphorylcholine or CDP-choline as donors. Can also transfer phosphoethanolamine head group of phosphatidylethanolamine (PE) on to ceramide (CER) to form ceramide phosphoethanolamine (CPE). Regulates receptor-mediated signal transduction via mitogenic DAG and proapoptotic CER, as well as via SM, a structural component of membrane rafts that serve as platforms for signal transduction and protein sorting. To a lesser extent, plays a role in secretory transport via regulation of DAG pool at the Golgi apparatus and its downstream effects on PRKD1. Required for normal bone matrix mineralization.</text>
</comment>
<comment type="catalytic activity">
    <reaction evidence="2">
        <text>an N-acylsphing-4-enine + a 1,2-diacyl-sn-glycero-3-phosphocholine = a sphingomyelin + a 1,2-diacyl-sn-glycerol</text>
        <dbReference type="Rhea" id="RHEA:18765"/>
        <dbReference type="ChEBI" id="CHEBI:17636"/>
        <dbReference type="ChEBI" id="CHEBI:17815"/>
        <dbReference type="ChEBI" id="CHEBI:52639"/>
        <dbReference type="ChEBI" id="CHEBI:57643"/>
        <dbReference type="EC" id="2.7.8.27"/>
    </reaction>
    <physiologicalReaction direction="left-to-right" evidence="2">
        <dbReference type="Rhea" id="RHEA:18766"/>
    </physiologicalReaction>
    <physiologicalReaction direction="right-to-left" evidence="2">
        <dbReference type="Rhea" id="RHEA:18767"/>
    </physiologicalReaction>
</comment>
<comment type="catalytic activity">
    <reaction evidence="2">
        <text>an N-acylsphinganine + a 1,2-diacyl-sn-glycero-3-phosphocholine = an N-acylsphinganine-1-phosphocholine + a 1,2-diacyl-sn-glycerol</text>
        <dbReference type="Rhea" id="RHEA:44620"/>
        <dbReference type="ChEBI" id="CHEBI:17815"/>
        <dbReference type="ChEBI" id="CHEBI:31488"/>
        <dbReference type="ChEBI" id="CHEBI:57643"/>
        <dbReference type="ChEBI" id="CHEBI:67090"/>
    </reaction>
    <physiologicalReaction direction="left-to-right" evidence="2">
        <dbReference type="Rhea" id="RHEA:44621"/>
    </physiologicalReaction>
    <physiologicalReaction direction="right-to-left" evidence="2">
        <dbReference type="Rhea" id="RHEA:44622"/>
    </physiologicalReaction>
</comment>
<comment type="catalytic activity">
    <reaction evidence="2">
        <text>an N-acyl-(4R)-4-hydroxysphinganine + a 1,2-diacyl-sn-glycero-3-phosphocholine = an N-acyl-(4R)-4-hydroxysphinganine-phosphocholine + a 1,2-diacyl-sn-glycerol</text>
        <dbReference type="Rhea" id="RHEA:42152"/>
        <dbReference type="ChEBI" id="CHEBI:17815"/>
        <dbReference type="ChEBI" id="CHEBI:31998"/>
        <dbReference type="ChEBI" id="CHEBI:57643"/>
        <dbReference type="ChEBI" id="CHEBI:78651"/>
    </reaction>
    <physiologicalReaction direction="left-to-right" evidence="2">
        <dbReference type="Rhea" id="RHEA:42153"/>
    </physiologicalReaction>
    <physiologicalReaction direction="right-to-left" evidence="2">
        <dbReference type="Rhea" id="RHEA:42154"/>
    </physiologicalReaction>
</comment>
<comment type="catalytic activity">
    <reaction evidence="3">
        <text>an N-acylsphing-4-enine + a 1,2-diacyl-sn-glycero-3-phosphoethanolamine = an N-acylsphing-4-enine 1-phosphoethanolamine + a 1,2-diacyl-sn-glycerol</text>
        <dbReference type="Rhea" id="RHEA:36079"/>
        <dbReference type="ChEBI" id="CHEBI:17815"/>
        <dbReference type="ChEBI" id="CHEBI:52639"/>
        <dbReference type="ChEBI" id="CHEBI:64612"/>
        <dbReference type="ChEBI" id="CHEBI:73203"/>
    </reaction>
    <physiologicalReaction direction="left-to-right" evidence="3">
        <dbReference type="Rhea" id="RHEA:36080"/>
    </physiologicalReaction>
</comment>
<comment type="catalytic activity">
    <reaction evidence="2">
        <text>an N-acylsphinganine + a 1,2-diacyl-sn-glycero-3-phosphoethanolamine = an N-acylsphinganine-1-phosphoethanolamine + a 1,2-diacyl-sn-glycerol</text>
        <dbReference type="Rhea" id="RHEA:42136"/>
        <dbReference type="ChEBI" id="CHEBI:17815"/>
        <dbReference type="ChEBI" id="CHEBI:31488"/>
        <dbReference type="ChEBI" id="CHEBI:64612"/>
        <dbReference type="ChEBI" id="CHEBI:78655"/>
    </reaction>
    <physiologicalReaction direction="left-to-right" evidence="2">
        <dbReference type="Rhea" id="RHEA:42137"/>
    </physiologicalReaction>
</comment>
<comment type="catalytic activity">
    <reaction evidence="2">
        <text>an N-acyl-(4R)-4-hydroxysphinganine + a 1,2-diacyl-sn-glycero-3-phosphoethanolamine = an N-acyl-(4R)-4-hydroxysphinganine-1-phosphoethanolamine + a 1,2-diacyl-sn-glycerol</text>
        <dbReference type="Rhea" id="RHEA:42148"/>
        <dbReference type="ChEBI" id="CHEBI:17815"/>
        <dbReference type="ChEBI" id="CHEBI:31998"/>
        <dbReference type="ChEBI" id="CHEBI:64612"/>
        <dbReference type="ChEBI" id="CHEBI:78657"/>
    </reaction>
    <physiologicalReaction direction="left-to-right" evidence="2">
        <dbReference type="Rhea" id="RHEA:42149"/>
    </physiologicalReaction>
</comment>
<comment type="catalytic activity">
    <reaction evidence="2">
        <text>1,2-dihexadecanoyl-sn-glycero-3-phosphocholine + an N-acylsphing-4-enine = 1,2-dihexadecanoyl-sn-glycerol + a sphingomyelin</text>
        <dbReference type="Rhea" id="RHEA:43324"/>
        <dbReference type="ChEBI" id="CHEBI:17636"/>
        <dbReference type="ChEBI" id="CHEBI:52639"/>
        <dbReference type="ChEBI" id="CHEBI:72999"/>
        <dbReference type="ChEBI" id="CHEBI:82929"/>
    </reaction>
    <physiologicalReaction direction="left-to-right" evidence="2">
        <dbReference type="Rhea" id="RHEA:43325"/>
    </physiologicalReaction>
    <physiologicalReaction direction="right-to-left" evidence="2">
        <dbReference type="Rhea" id="RHEA:43326"/>
    </physiologicalReaction>
</comment>
<comment type="catalytic activity">
    <reaction evidence="2">
        <text>1-(9Z-octadecenoyl)-2-acyl-sn-3-glycerol + a sphingomyelin = a 1-(9Z-octadecenoyl)-2-acyl-sn-glycero-3-phosphocholine + an N-acylsphing-4-enine</text>
        <dbReference type="Rhea" id="RHEA:43320"/>
        <dbReference type="ChEBI" id="CHEBI:17636"/>
        <dbReference type="ChEBI" id="CHEBI:52639"/>
        <dbReference type="ChEBI" id="CHEBI:78421"/>
        <dbReference type="ChEBI" id="CHEBI:82983"/>
    </reaction>
    <physiologicalReaction direction="left-to-right" evidence="2">
        <dbReference type="Rhea" id="RHEA:43321"/>
    </physiologicalReaction>
    <physiologicalReaction direction="right-to-left" evidence="2">
        <dbReference type="Rhea" id="RHEA:43322"/>
    </physiologicalReaction>
</comment>
<comment type="catalytic activity">
    <reaction evidence="2">
        <text>N-hexadecanoylsphinganine + a 1,2-diacyl-sn-glycero-3-phosphocholine = N-hexadecanoyl-sphinganine-1-phosphocholine + a 1,2-diacyl-sn-glycerol</text>
        <dbReference type="Rhea" id="RHEA:41796"/>
        <dbReference type="ChEBI" id="CHEBI:17815"/>
        <dbReference type="ChEBI" id="CHEBI:57643"/>
        <dbReference type="ChEBI" id="CHEBI:67042"/>
        <dbReference type="ChEBI" id="CHEBI:78647"/>
    </reaction>
    <physiologicalReaction direction="left-to-right" evidence="2">
        <dbReference type="Rhea" id="RHEA:41797"/>
    </physiologicalReaction>
    <physiologicalReaction direction="right-to-left" evidence="2">
        <dbReference type="Rhea" id="RHEA:41798"/>
    </physiologicalReaction>
</comment>
<comment type="catalytic activity">
    <reaction evidence="2">
        <text>N-hexadecanoyl-(4R)-hydroxysphinganine + a 1,2-diacyl-sn-glycero-3-phosphocholine = N-hexadecanoyl-(4R)-hydroxysphinganine-phosphocholine + a 1,2-diacyl-sn-glycerol</text>
        <dbReference type="Rhea" id="RHEA:42140"/>
        <dbReference type="ChEBI" id="CHEBI:17815"/>
        <dbReference type="ChEBI" id="CHEBI:57643"/>
        <dbReference type="ChEBI" id="CHEBI:65107"/>
        <dbReference type="ChEBI" id="CHEBI:78650"/>
    </reaction>
    <physiologicalReaction direction="left-to-right" evidence="2">
        <dbReference type="Rhea" id="RHEA:42141"/>
    </physiologicalReaction>
    <physiologicalReaction direction="right-to-left" evidence="2">
        <dbReference type="Rhea" id="RHEA:42142"/>
    </physiologicalReaction>
</comment>
<comment type="catalytic activity">
    <reaction evidence="2">
        <text>N-hexadecanoylsphinganine + a 1,2-diacyl-sn-glycero-3-phosphoethanolamine = N-hexadecanoyl-sphinganine-1-phosphoethanolamine + a 1,2-diacyl-sn-glycerol</text>
        <dbReference type="Rhea" id="RHEA:42128"/>
        <dbReference type="ChEBI" id="CHEBI:17815"/>
        <dbReference type="ChEBI" id="CHEBI:64612"/>
        <dbReference type="ChEBI" id="CHEBI:67042"/>
        <dbReference type="ChEBI" id="CHEBI:78654"/>
    </reaction>
    <physiologicalReaction direction="left-to-right" evidence="2">
        <dbReference type="Rhea" id="RHEA:42129"/>
    </physiologicalReaction>
</comment>
<comment type="catalytic activity">
    <reaction evidence="2">
        <text>N-hexadecanoyl-(4R)-hydroxysphinganine + a 1,2-diacyl-sn-glycero-3-phosphoethanolamine = N-hexadecanoyl-(4R)-hydroxysphinganine-1-phosphoethanolamine + a 1,2-diacyl-sn-glycerol</text>
        <dbReference type="Rhea" id="RHEA:42144"/>
        <dbReference type="ChEBI" id="CHEBI:17815"/>
        <dbReference type="ChEBI" id="CHEBI:64612"/>
        <dbReference type="ChEBI" id="CHEBI:65107"/>
        <dbReference type="ChEBI" id="CHEBI:78656"/>
    </reaction>
    <physiologicalReaction direction="left-to-right" evidence="2">
        <dbReference type="Rhea" id="RHEA:42145"/>
    </physiologicalReaction>
</comment>
<comment type="pathway">
    <text evidence="2">Sphingolipid metabolism.</text>
</comment>
<comment type="subcellular location">
    <subcellularLocation>
        <location evidence="2">Cell membrane</location>
        <topology evidence="4">Multi-pass membrane protein</topology>
    </subcellularLocation>
    <subcellularLocation>
        <location evidence="2">Golgi apparatus membrane</location>
        <topology evidence="4">Multi-pass membrane protein</topology>
    </subcellularLocation>
    <text evidence="2">Primarily localized at the plasma membrane with a small fraction at the Golgi apparatus.</text>
</comment>
<comment type="PTM">
    <text evidence="1">Palmitoylated on Cys-331, Cys-332, Cys-343 and Cys-348; which plays an important role in plasma membrane localization.</text>
</comment>
<comment type="similarity">
    <text evidence="6">Belongs to the sphingomyelin synthase family.</text>
</comment>
<protein>
    <recommendedName>
        <fullName>Phosphatidylcholine:ceramide cholinephosphotransferase 2</fullName>
        <ecNumber evidence="2">2.7.8.27</ecNumber>
    </recommendedName>
    <alternativeName>
        <fullName>Sphingomyelin synthase 2</fullName>
        <shortName>Sms2</shortName>
    </alternativeName>
</protein>
<name>SMS2_MACFA</name>
<keyword id="KW-1003">Cell membrane</keyword>
<keyword id="KW-0333">Golgi apparatus</keyword>
<keyword id="KW-0418">Kinase</keyword>
<keyword id="KW-0443">Lipid metabolism</keyword>
<keyword id="KW-0449">Lipoprotein</keyword>
<keyword id="KW-0472">Membrane</keyword>
<keyword id="KW-0564">Palmitate</keyword>
<keyword id="KW-1185">Reference proteome</keyword>
<keyword id="KW-0746">Sphingolipid metabolism</keyword>
<keyword id="KW-0808">Transferase</keyword>
<keyword id="KW-0812">Transmembrane</keyword>
<keyword id="KW-1133">Transmembrane helix</keyword>